<organism>
    <name type="scientific">Helianthus annuus</name>
    <name type="common">Common sunflower</name>
    <dbReference type="NCBI Taxonomy" id="4232"/>
    <lineage>
        <taxon>Eukaryota</taxon>
        <taxon>Viridiplantae</taxon>
        <taxon>Streptophyta</taxon>
        <taxon>Embryophyta</taxon>
        <taxon>Tracheophyta</taxon>
        <taxon>Spermatophyta</taxon>
        <taxon>Magnoliopsida</taxon>
        <taxon>eudicotyledons</taxon>
        <taxon>Gunneridae</taxon>
        <taxon>Pentapetalae</taxon>
        <taxon>asterids</taxon>
        <taxon>campanulids</taxon>
        <taxon>Asterales</taxon>
        <taxon>Asteraceae</taxon>
        <taxon>Asteroideae</taxon>
        <taxon>Heliantheae alliance</taxon>
        <taxon>Heliantheae</taxon>
        <taxon>Helianthus</taxon>
    </lineage>
</organism>
<evidence type="ECO:0000255" key="1">
    <source>
        <dbReference type="HAMAP-Rule" id="MF_00432"/>
    </source>
</evidence>
<dbReference type="EMBL" id="DQ383815">
    <property type="protein sequence ID" value="ABD47165.1"/>
    <property type="molecule type" value="Genomic_DNA"/>
</dbReference>
<dbReference type="RefSeq" id="YP_588136.1">
    <property type="nucleotide sequence ID" value="NC_007977.1"/>
</dbReference>
<dbReference type="SMR" id="Q1KXU0"/>
<dbReference type="GeneID" id="4055673"/>
<dbReference type="KEGG" id="han:4055673"/>
<dbReference type="OrthoDB" id="35473at2759"/>
<dbReference type="GO" id="GO:0009535">
    <property type="term" value="C:chloroplast thylakoid membrane"/>
    <property type="evidence" value="ECO:0007669"/>
    <property type="project" value="UniProtKB-SubCell"/>
</dbReference>
<dbReference type="GO" id="GO:0009512">
    <property type="term" value="C:cytochrome b6f complex"/>
    <property type="evidence" value="ECO:0007669"/>
    <property type="project" value="InterPro"/>
</dbReference>
<dbReference type="GO" id="GO:0045158">
    <property type="term" value="F:electron transporter, transferring electrons within cytochrome b6/f complex of photosystem II activity"/>
    <property type="evidence" value="ECO:0007669"/>
    <property type="project" value="UniProtKB-UniRule"/>
</dbReference>
<dbReference type="GO" id="GO:0017004">
    <property type="term" value="P:cytochrome complex assembly"/>
    <property type="evidence" value="ECO:0007669"/>
    <property type="project" value="UniProtKB-UniRule"/>
</dbReference>
<dbReference type="GO" id="GO:0015979">
    <property type="term" value="P:photosynthesis"/>
    <property type="evidence" value="ECO:0007669"/>
    <property type="project" value="UniProtKB-KW"/>
</dbReference>
<dbReference type="HAMAP" id="MF_00432">
    <property type="entry name" value="Cytb6_f_PetG"/>
    <property type="match status" value="1"/>
</dbReference>
<dbReference type="InterPro" id="IPR003683">
    <property type="entry name" value="Cyt_6/f_cplx_su5"/>
</dbReference>
<dbReference type="InterPro" id="IPR036099">
    <property type="entry name" value="Cyt_6/f_cplx_su5_sf"/>
</dbReference>
<dbReference type="NCBIfam" id="NF001907">
    <property type="entry name" value="PRK00665.1"/>
    <property type="match status" value="1"/>
</dbReference>
<dbReference type="Pfam" id="PF02529">
    <property type="entry name" value="PetG"/>
    <property type="match status" value="1"/>
</dbReference>
<dbReference type="PIRSF" id="PIRSF000034">
    <property type="entry name" value="Cyt_b6-f_V"/>
    <property type="match status" value="1"/>
</dbReference>
<dbReference type="SUPFAM" id="SSF103446">
    <property type="entry name" value="PetG subunit of the cytochrome b6f complex"/>
    <property type="match status" value="1"/>
</dbReference>
<feature type="chain" id="PRO_0000275492" description="Cytochrome b6-f complex subunit 5">
    <location>
        <begin position="1"/>
        <end position="37"/>
    </location>
</feature>
<feature type="transmembrane region" description="Helical" evidence="1">
    <location>
        <begin position="5"/>
        <end position="25"/>
    </location>
</feature>
<proteinExistence type="inferred from homology"/>
<name>PETG_HELAN</name>
<comment type="function">
    <text evidence="1">Component of the cytochrome b6-f complex, which mediates electron transfer between photosystem II (PSII) and photosystem I (PSI), cyclic electron flow around PSI, and state transitions. PetG is required for either the stability or assembly of the cytochrome b6-f complex.</text>
</comment>
<comment type="subunit">
    <text evidence="1">The 4 large subunits of the cytochrome b6-f complex are cytochrome b6, subunit IV (17 kDa polypeptide, PetD), cytochrome f and the Rieske protein, while the 4 small subunits are PetG, PetL, PetM and PetN. The complex functions as a dimer.</text>
</comment>
<comment type="subcellular location">
    <subcellularLocation>
        <location evidence="1">Plastid</location>
        <location evidence="1">Chloroplast thylakoid membrane</location>
        <topology evidence="1">Single-pass membrane protein</topology>
    </subcellularLocation>
</comment>
<comment type="similarity">
    <text evidence="1">Belongs to the PetG family.</text>
</comment>
<accession>Q1KXU0</accession>
<protein>
    <recommendedName>
        <fullName evidence="1">Cytochrome b6-f complex subunit 5</fullName>
    </recommendedName>
    <alternativeName>
        <fullName evidence="1">Cytochrome b6-f complex subunit PetG</fullName>
    </alternativeName>
    <alternativeName>
        <fullName evidence="1">Cytochrome b6-f complex subunit V</fullName>
    </alternativeName>
</protein>
<reference key="1">
    <citation type="submission" date="2006-01" db="EMBL/GenBank/DDBJ databases">
        <title>A comparison of the first two published chloroplast genomes in Asteraceae: Lactuca and Helianthus.</title>
        <authorList>
            <person name="Timme R.E."/>
            <person name="Kuehl J.V."/>
            <person name="Boore J.L."/>
            <person name="Jansen R.K."/>
        </authorList>
    </citation>
    <scope>NUCLEOTIDE SEQUENCE [LARGE SCALE GENOMIC DNA]</scope>
    <source>
        <strain>cv. HA383</strain>
    </source>
</reference>
<sequence length="37" mass="4170">MIEVFLFGIVLGLIPITLAGLFVTAYLQYRRGDQLDL</sequence>
<geneLocation type="chloroplast"/>
<gene>
    <name evidence="1" type="primary">petG</name>
</gene>
<keyword id="KW-0150">Chloroplast</keyword>
<keyword id="KW-0249">Electron transport</keyword>
<keyword id="KW-0472">Membrane</keyword>
<keyword id="KW-0602">Photosynthesis</keyword>
<keyword id="KW-0934">Plastid</keyword>
<keyword id="KW-0793">Thylakoid</keyword>
<keyword id="KW-0812">Transmembrane</keyword>
<keyword id="KW-1133">Transmembrane helix</keyword>
<keyword id="KW-0813">Transport</keyword>